<dbReference type="EC" id="5.4.99.12" evidence="1"/>
<dbReference type="EMBL" id="CP000300">
    <property type="protein sequence ID" value="ABE52529.1"/>
    <property type="molecule type" value="Genomic_DNA"/>
</dbReference>
<dbReference type="RefSeq" id="WP_011499673.1">
    <property type="nucleotide sequence ID" value="NC_007955.1"/>
</dbReference>
<dbReference type="SMR" id="Q12VJ7"/>
<dbReference type="STRING" id="259564.Mbur_1625"/>
<dbReference type="GeneID" id="3997259"/>
<dbReference type="KEGG" id="mbu:Mbur_1625"/>
<dbReference type="HOGENOM" id="CLU_014673_4_2_2"/>
<dbReference type="OrthoDB" id="25720at2157"/>
<dbReference type="Proteomes" id="UP000001979">
    <property type="component" value="Chromosome"/>
</dbReference>
<dbReference type="GO" id="GO:0003723">
    <property type="term" value="F:RNA binding"/>
    <property type="evidence" value="ECO:0007669"/>
    <property type="project" value="InterPro"/>
</dbReference>
<dbReference type="GO" id="GO:0160147">
    <property type="term" value="F:tRNA pseudouridine(38-40) synthase activity"/>
    <property type="evidence" value="ECO:0007669"/>
    <property type="project" value="UniProtKB-EC"/>
</dbReference>
<dbReference type="GO" id="GO:0031119">
    <property type="term" value="P:tRNA pseudouridine synthesis"/>
    <property type="evidence" value="ECO:0007669"/>
    <property type="project" value="UniProtKB-UniRule"/>
</dbReference>
<dbReference type="Gene3D" id="3.30.70.660">
    <property type="entry name" value="Pseudouridine synthase I, catalytic domain, C-terminal subdomain"/>
    <property type="match status" value="1"/>
</dbReference>
<dbReference type="Gene3D" id="3.30.70.580">
    <property type="entry name" value="Pseudouridine synthase I, catalytic domain, N-terminal subdomain"/>
    <property type="match status" value="1"/>
</dbReference>
<dbReference type="HAMAP" id="MF_00171">
    <property type="entry name" value="TruA"/>
    <property type="match status" value="1"/>
</dbReference>
<dbReference type="InterPro" id="IPR020103">
    <property type="entry name" value="PsdUridine_synth_cat_dom_sf"/>
</dbReference>
<dbReference type="InterPro" id="IPR001406">
    <property type="entry name" value="PsdUridine_synth_TruA"/>
</dbReference>
<dbReference type="InterPro" id="IPR020097">
    <property type="entry name" value="PsdUridine_synth_TruA_a/b_dom"/>
</dbReference>
<dbReference type="InterPro" id="IPR020095">
    <property type="entry name" value="PsdUridine_synth_TruA_C"/>
</dbReference>
<dbReference type="InterPro" id="IPR020094">
    <property type="entry name" value="TruA/RsuA/RluB/E/F_N"/>
</dbReference>
<dbReference type="NCBIfam" id="TIGR00071">
    <property type="entry name" value="hisT_truA"/>
    <property type="match status" value="1"/>
</dbReference>
<dbReference type="PANTHER" id="PTHR11142">
    <property type="entry name" value="PSEUDOURIDYLATE SYNTHASE"/>
    <property type="match status" value="1"/>
</dbReference>
<dbReference type="PANTHER" id="PTHR11142:SF0">
    <property type="entry name" value="TRNA PSEUDOURIDINE SYNTHASE-LIKE 1"/>
    <property type="match status" value="1"/>
</dbReference>
<dbReference type="Pfam" id="PF01416">
    <property type="entry name" value="PseudoU_synth_1"/>
    <property type="match status" value="1"/>
</dbReference>
<dbReference type="PIRSF" id="PIRSF001430">
    <property type="entry name" value="tRNA_psdUrid_synth"/>
    <property type="match status" value="1"/>
</dbReference>
<dbReference type="SUPFAM" id="SSF55120">
    <property type="entry name" value="Pseudouridine synthase"/>
    <property type="match status" value="1"/>
</dbReference>
<name>TRUA_METBU</name>
<proteinExistence type="inferred from homology"/>
<reference key="1">
    <citation type="journal article" date="2009" name="ISME J.">
        <title>The genome sequence of the psychrophilic archaeon, Methanococcoides burtonii: the role of genome evolution in cold adaptation.</title>
        <authorList>
            <person name="Allen M.A."/>
            <person name="Lauro F.M."/>
            <person name="Williams T.J."/>
            <person name="Burg D."/>
            <person name="Siddiqui K.S."/>
            <person name="De Francisci D."/>
            <person name="Chong K.W."/>
            <person name="Pilak O."/>
            <person name="Chew H.H."/>
            <person name="De Maere M.Z."/>
            <person name="Ting L."/>
            <person name="Katrib M."/>
            <person name="Ng C."/>
            <person name="Sowers K.R."/>
            <person name="Galperin M.Y."/>
            <person name="Anderson I.J."/>
            <person name="Ivanova N."/>
            <person name="Dalin E."/>
            <person name="Martinez M."/>
            <person name="Lapidus A."/>
            <person name="Hauser L."/>
            <person name="Land M."/>
            <person name="Thomas T."/>
            <person name="Cavicchioli R."/>
        </authorList>
    </citation>
    <scope>NUCLEOTIDE SEQUENCE [LARGE SCALE GENOMIC DNA]</scope>
    <source>
        <strain>DSM 6242 / NBRC 107633 / OCM 468 / ACE-M</strain>
    </source>
</reference>
<gene>
    <name evidence="1" type="primary">truA</name>
    <name type="ordered locus">Mbur_1625</name>
</gene>
<protein>
    <recommendedName>
        <fullName evidence="1">tRNA pseudouridine synthase A</fullName>
        <ecNumber evidence="1">5.4.99.12</ecNumber>
    </recommendedName>
    <alternativeName>
        <fullName evidence="1">tRNA pseudouridine(38-40) synthase</fullName>
    </alternativeName>
    <alternativeName>
        <fullName evidence="1">tRNA pseudouridylate synthase I</fullName>
    </alternativeName>
    <alternativeName>
        <fullName evidence="1">tRNA-uridine isomerase I</fullName>
    </alternativeName>
</protein>
<evidence type="ECO:0000255" key="1">
    <source>
        <dbReference type="HAMAP-Rule" id="MF_00171"/>
    </source>
</evidence>
<organism>
    <name type="scientific">Methanococcoides burtonii (strain DSM 6242 / NBRC 107633 / OCM 468 / ACE-M)</name>
    <dbReference type="NCBI Taxonomy" id="259564"/>
    <lineage>
        <taxon>Archaea</taxon>
        <taxon>Methanobacteriati</taxon>
        <taxon>Methanobacteriota</taxon>
        <taxon>Stenosarchaea group</taxon>
        <taxon>Methanomicrobia</taxon>
        <taxon>Methanosarcinales</taxon>
        <taxon>Methanosarcinaceae</taxon>
        <taxon>Methanococcoides</taxon>
    </lineage>
</organism>
<keyword id="KW-0413">Isomerase</keyword>
<keyword id="KW-0819">tRNA processing</keyword>
<sequence>MRVALKIAYIGSNFHGSQVQLNDPTVEGELFKVLKELGIMEDPRTANFISSGRTDSGVHAMGQVVAFDTDAPNLAMPRVINSKLPGTIWAWAHAIVPENFDPRRHALSRSYRYILYGEQFDISKIRSASKLLLGSHDFSNFSTSRGSKKTVRIVKRIDIRVSGNLTRIDVEANSFLWNMVRKIVAALMMVGSGVRDEEWLGHMLDPESYEEGLEPAHGYGLVLMDVNYPIPLEWVEDGYAIRRARERVHDHLVRYRVMADILSHLFPSESSDELL</sequence>
<comment type="function">
    <text evidence="1">Formation of pseudouridine at positions 38, 39 and 40 in the anticodon stem and loop of transfer RNAs.</text>
</comment>
<comment type="catalytic activity">
    <reaction evidence="1">
        <text>uridine(38/39/40) in tRNA = pseudouridine(38/39/40) in tRNA</text>
        <dbReference type="Rhea" id="RHEA:22376"/>
        <dbReference type="Rhea" id="RHEA-COMP:10085"/>
        <dbReference type="Rhea" id="RHEA-COMP:10087"/>
        <dbReference type="ChEBI" id="CHEBI:65314"/>
        <dbReference type="ChEBI" id="CHEBI:65315"/>
        <dbReference type="EC" id="5.4.99.12"/>
    </reaction>
</comment>
<comment type="similarity">
    <text evidence="1">Belongs to the tRNA pseudouridine synthase TruA family.</text>
</comment>
<feature type="chain" id="PRO_1000017112" description="tRNA pseudouridine synthase A">
    <location>
        <begin position="1"/>
        <end position="275"/>
    </location>
</feature>
<feature type="active site" description="Nucleophile" evidence="1">
    <location>
        <position position="55"/>
    </location>
</feature>
<feature type="binding site" evidence="1">
    <location>
        <position position="111"/>
    </location>
    <ligand>
        <name>substrate</name>
    </ligand>
</feature>
<accession>Q12VJ7</accession>